<name>SMG_XANE5</name>
<evidence type="ECO:0000255" key="1">
    <source>
        <dbReference type="HAMAP-Rule" id="MF_00598"/>
    </source>
</evidence>
<comment type="similarity">
    <text evidence="1">Belongs to the Smg family.</text>
</comment>
<feature type="chain" id="PRO_1000025679" description="Protein Smg homolog">
    <location>
        <begin position="1"/>
        <end position="157"/>
    </location>
</feature>
<organism>
    <name type="scientific">Xanthomonas euvesicatoria pv. vesicatoria (strain 85-10)</name>
    <name type="common">Xanthomonas campestris pv. vesicatoria</name>
    <dbReference type="NCBI Taxonomy" id="316273"/>
    <lineage>
        <taxon>Bacteria</taxon>
        <taxon>Pseudomonadati</taxon>
        <taxon>Pseudomonadota</taxon>
        <taxon>Gammaproteobacteria</taxon>
        <taxon>Lysobacterales</taxon>
        <taxon>Lysobacteraceae</taxon>
        <taxon>Xanthomonas</taxon>
    </lineage>
</organism>
<accession>Q3BNK3</accession>
<reference key="1">
    <citation type="journal article" date="2005" name="J. Bacteriol.">
        <title>Insights into genome plasticity and pathogenicity of the plant pathogenic Bacterium Xanthomonas campestris pv. vesicatoria revealed by the complete genome sequence.</title>
        <authorList>
            <person name="Thieme F."/>
            <person name="Koebnik R."/>
            <person name="Bekel T."/>
            <person name="Berger C."/>
            <person name="Boch J."/>
            <person name="Buettner D."/>
            <person name="Caldana C."/>
            <person name="Gaigalat L."/>
            <person name="Goesmann A."/>
            <person name="Kay S."/>
            <person name="Kirchner O."/>
            <person name="Lanz C."/>
            <person name="Linke B."/>
            <person name="McHardy A.C."/>
            <person name="Meyer F."/>
            <person name="Mittenhuber G."/>
            <person name="Nies D.H."/>
            <person name="Niesbach-Kloesgen U."/>
            <person name="Patschkowski T."/>
            <person name="Rueckert C."/>
            <person name="Rupp O."/>
            <person name="Schneiker S."/>
            <person name="Schuster S.C."/>
            <person name="Vorhoelter F.J."/>
            <person name="Weber E."/>
            <person name="Puehler A."/>
            <person name="Bonas U."/>
            <person name="Bartels D."/>
            <person name="Kaiser O."/>
        </authorList>
    </citation>
    <scope>NUCLEOTIDE SEQUENCE [LARGE SCALE GENOMIC DNA]</scope>
    <source>
        <strain>85-10</strain>
    </source>
</reference>
<protein>
    <recommendedName>
        <fullName evidence="1">Protein Smg homolog</fullName>
    </recommendedName>
</protein>
<sequence>MKESILDVLLYLFEHYFSEDADLVRDRDSLQNGLIQAGFSPAEISKAFDWLDALSEQRPSVARPHVDGPVRIYHGPELDKLDVDCRGFLLFLEQHRILDADQRELVLDRAMALDQDELDLDDLKWVVLMVLFNQPGAEAAYAWMETQMFLDEPESVH</sequence>
<gene>
    <name evidence="1" type="primary">smg</name>
    <name type="ordered locus">XCV3929</name>
</gene>
<proteinExistence type="inferred from homology"/>
<dbReference type="EMBL" id="AM039952">
    <property type="protein sequence ID" value="CAJ25660.1"/>
    <property type="molecule type" value="Genomic_DNA"/>
</dbReference>
<dbReference type="RefSeq" id="WP_011348785.1">
    <property type="nucleotide sequence ID" value="NZ_CP017190.1"/>
</dbReference>
<dbReference type="SMR" id="Q3BNK3"/>
<dbReference type="STRING" id="456327.BJD11_02995"/>
<dbReference type="KEGG" id="xcv:XCV3929"/>
<dbReference type="eggNOG" id="COG2922">
    <property type="taxonomic scope" value="Bacteria"/>
</dbReference>
<dbReference type="HOGENOM" id="CLU_133242_0_0_6"/>
<dbReference type="Proteomes" id="UP000007069">
    <property type="component" value="Chromosome"/>
</dbReference>
<dbReference type="HAMAP" id="MF_00598">
    <property type="entry name" value="Smg"/>
    <property type="match status" value="1"/>
</dbReference>
<dbReference type="InterPro" id="IPR007456">
    <property type="entry name" value="Smg"/>
</dbReference>
<dbReference type="NCBIfam" id="NF002897">
    <property type="entry name" value="PRK03430.1"/>
    <property type="match status" value="1"/>
</dbReference>
<dbReference type="PANTHER" id="PTHR38692">
    <property type="entry name" value="PROTEIN SMG"/>
    <property type="match status" value="1"/>
</dbReference>
<dbReference type="PANTHER" id="PTHR38692:SF1">
    <property type="entry name" value="PROTEIN SMG"/>
    <property type="match status" value="1"/>
</dbReference>
<dbReference type="Pfam" id="PF04361">
    <property type="entry name" value="DUF494"/>
    <property type="match status" value="1"/>
</dbReference>